<organism>
    <name type="scientific">Vibrio vulnificus (strain YJ016)</name>
    <dbReference type="NCBI Taxonomy" id="196600"/>
    <lineage>
        <taxon>Bacteria</taxon>
        <taxon>Pseudomonadati</taxon>
        <taxon>Pseudomonadota</taxon>
        <taxon>Gammaproteobacteria</taxon>
        <taxon>Vibrionales</taxon>
        <taxon>Vibrionaceae</taxon>
        <taxon>Vibrio</taxon>
    </lineage>
</organism>
<comment type="function">
    <text evidence="1">This protein binds to 23S rRNA in the presence of protein L20.</text>
</comment>
<comment type="subunit">
    <text evidence="1">Part of the 50S ribosomal subunit. Contacts protein L20.</text>
</comment>
<comment type="similarity">
    <text evidence="1">Belongs to the bacterial ribosomal protein bL21 family.</text>
</comment>
<proteinExistence type="inferred from homology"/>
<dbReference type="EMBL" id="BA000037">
    <property type="protein sequence ID" value="BAC93234.1"/>
    <property type="molecule type" value="Genomic_DNA"/>
</dbReference>
<dbReference type="RefSeq" id="WP_000271393.1">
    <property type="nucleotide sequence ID" value="NC_005139.1"/>
</dbReference>
<dbReference type="SMR" id="Q7MP94"/>
<dbReference type="STRING" id="672.VV93_v1c04370"/>
<dbReference type="GeneID" id="95679033"/>
<dbReference type="KEGG" id="vvy:VV0470"/>
<dbReference type="eggNOG" id="COG0261">
    <property type="taxonomic scope" value="Bacteria"/>
</dbReference>
<dbReference type="HOGENOM" id="CLU_061463_3_3_6"/>
<dbReference type="Proteomes" id="UP000002675">
    <property type="component" value="Chromosome I"/>
</dbReference>
<dbReference type="GO" id="GO:0005737">
    <property type="term" value="C:cytoplasm"/>
    <property type="evidence" value="ECO:0007669"/>
    <property type="project" value="UniProtKB-ARBA"/>
</dbReference>
<dbReference type="GO" id="GO:1990904">
    <property type="term" value="C:ribonucleoprotein complex"/>
    <property type="evidence" value="ECO:0007669"/>
    <property type="project" value="UniProtKB-KW"/>
</dbReference>
<dbReference type="GO" id="GO:0005840">
    <property type="term" value="C:ribosome"/>
    <property type="evidence" value="ECO:0007669"/>
    <property type="project" value="UniProtKB-KW"/>
</dbReference>
<dbReference type="GO" id="GO:0019843">
    <property type="term" value="F:rRNA binding"/>
    <property type="evidence" value="ECO:0007669"/>
    <property type="project" value="UniProtKB-UniRule"/>
</dbReference>
<dbReference type="GO" id="GO:0003735">
    <property type="term" value="F:structural constituent of ribosome"/>
    <property type="evidence" value="ECO:0007669"/>
    <property type="project" value="InterPro"/>
</dbReference>
<dbReference type="GO" id="GO:0006412">
    <property type="term" value="P:translation"/>
    <property type="evidence" value="ECO:0007669"/>
    <property type="project" value="UniProtKB-UniRule"/>
</dbReference>
<dbReference type="HAMAP" id="MF_01363">
    <property type="entry name" value="Ribosomal_bL21"/>
    <property type="match status" value="1"/>
</dbReference>
<dbReference type="InterPro" id="IPR028909">
    <property type="entry name" value="bL21-like"/>
</dbReference>
<dbReference type="InterPro" id="IPR036164">
    <property type="entry name" value="bL21-like_sf"/>
</dbReference>
<dbReference type="InterPro" id="IPR001787">
    <property type="entry name" value="Ribosomal_bL21"/>
</dbReference>
<dbReference type="InterPro" id="IPR018258">
    <property type="entry name" value="Ribosomal_bL21_CS"/>
</dbReference>
<dbReference type="NCBIfam" id="TIGR00061">
    <property type="entry name" value="L21"/>
    <property type="match status" value="1"/>
</dbReference>
<dbReference type="PANTHER" id="PTHR21349">
    <property type="entry name" value="50S RIBOSOMAL PROTEIN L21"/>
    <property type="match status" value="1"/>
</dbReference>
<dbReference type="PANTHER" id="PTHR21349:SF0">
    <property type="entry name" value="LARGE RIBOSOMAL SUBUNIT PROTEIN BL21M"/>
    <property type="match status" value="1"/>
</dbReference>
<dbReference type="Pfam" id="PF00829">
    <property type="entry name" value="Ribosomal_L21p"/>
    <property type="match status" value="1"/>
</dbReference>
<dbReference type="SUPFAM" id="SSF141091">
    <property type="entry name" value="L21p-like"/>
    <property type="match status" value="1"/>
</dbReference>
<dbReference type="PROSITE" id="PS01169">
    <property type="entry name" value="RIBOSOMAL_L21"/>
    <property type="match status" value="1"/>
</dbReference>
<accession>Q7MP94</accession>
<evidence type="ECO:0000255" key="1">
    <source>
        <dbReference type="HAMAP-Rule" id="MF_01363"/>
    </source>
</evidence>
<evidence type="ECO:0000305" key="2"/>
<gene>
    <name evidence="1" type="primary">rplU</name>
    <name type="ordered locus">VV0470</name>
</gene>
<sequence>MYAVFQSGGKQHRVSEGQTLRLEKLDVETGATVEFDKVLLVANGEDIKVGAPLVEGGKVVAEVVQHGRGDKVKIVKFRRRKHSRKQQGHRQWFTEVKITGINA</sequence>
<keyword id="KW-0687">Ribonucleoprotein</keyword>
<keyword id="KW-0689">Ribosomal protein</keyword>
<keyword id="KW-0694">RNA-binding</keyword>
<keyword id="KW-0699">rRNA-binding</keyword>
<name>RL21_VIBVY</name>
<reference key="1">
    <citation type="journal article" date="2003" name="Genome Res.">
        <title>Comparative genome analysis of Vibrio vulnificus, a marine pathogen.</title>
        <authorList>
            <person name="Chen C.-Y."/>
            <person name="Wu K.-M."/>
            <person name="Chang Y.-C."/>
            <person name="Chang C.-H."/>
            <person name="Tsai H.-C."/>
            <person name="Liao T.-L."/>
            <person name="Liu Y.-M."/>
            <person name="Chen H.-J."/>
            <person name="Shen A.B.-T."/>
            <person name="Li J.-C."/>
            <person name="Su T.-L."/>
            <person name="Shao C.-P."/>
            <person name="Lee C.-T."/>
            <person name="Hor L.-I."/>
            <person name="Tsai S.-F."/>
        </authorList>
    </citation>
    <scope>NUCLEOTIDE SEQUENCE [LARGE SCALE GENOMIC DNA]</scope>
    <source>
        <strain>YJ016</strain>
    </source>
</reference>
<feature type="chain" id="PRO_0000269425" description="Large ribosomal subunit protein bL21">
    <location>
        <begin position="1"/>
        <end position="103"/>
    </location>
</feature>
<protein>
    <recommendedName>
        <fullName evidence="1">Large ribosomal subunit protein bL21</fullName>
    </recommendedName>
    <alternativeName>
        <fullName evidence="2">50S ribosomal protein L21</fullName>
    </alternativeName>
</protein>